<name>U512E_DICDI</name>
<comment type="similarity">
    <text evidence="2">Belongs to the UPF0512 family.</text>
</comment>
<keyword id="KW-1185">Reference proteome</keyword>
<dbReference type="EMBL" id="AAFI02000005">
    <property type="protein sequence ID" value="EAL72259.1"/>
    <property type="molecule type" value="Genomic_DNA"/>
</dbReference>
<dbReference type="RefSeq" id="XP_646316.1">
    <property type="nucleotide sequence ID" value="XM_641224.1"/>
</dbReference>
<dbReference type="FunCoup" id="Q55D15">
    <property type="interactions" value="640"/>
</dbReference>
<dbReference type="PaxDb" id="44689-DDB0266571"/>
<dbReference type="EnsemblProtists" id="EAL72259">
    <property type="protein sequence ID" value="EAL72259"/>
    <property type="gene ID" value="DDB_G0269818"/>
</dbReference>
<dbReference type="GeneID" id="8617271"/>
<dbReference type="KEGG" id="ddi:DDB_G0269818"/>
<dbReference type="dictyBase" id="DDB_G0269818"/>
<dbReference type="HOGENOM" id="CLU_194865_0_0_1"/>
<dbReference type="InParanoid" id="Q55D15"/>
<dbReference type="PRO" id="PR:Q55D15"/>
<dbReference type="Proteomes" id="UP000002195">
    <property type="component" value="Chromosome 1"/>
</dbReference>
<reference key="1">
    <citation type="journal article" date="2005" name="Nature">
        <title>The genome of the social amoeba Dictyostelium discoideum.</title>
        <authorList>
            <person name="Eichinger L."/>
            <person name="Pachebat J.A."/>
            <person name="Gloeckner G."/>
            <person name="Rajandream M.A."/>
            <person name="Sucgang R."/>
            <person name="Berriman M."/>
            <person name="Song J."/>
            <person name="Olsen R."/>
            <person name="Szafranski K."/>
            <person name="Xu Q."/>
            <person name="Tunggal B."/>
            <person name="Kummerfeld S."/>
            <person name="Madera M."/>
            <person name="Konfortov B.A."/>
            <person name="Rivero F."/>
            <person name="Bankier A.T."/>
            <person name="Lehmann R."/>
            <person name="Hamlin N."/>
            <person name="Davies R."/>
            <person name="Gaudet P."/>
            <person name="Fey P."/>
            <person name="Pilcher K."/>
            <person name="Chen G."/>
            <person name="Saunders D."/>
            <person name="Sodergren E.J."/>
            <person name="Davis P."/>
            <person name="Kerhornou A."/>
            <person name="Nie X."/>
            <person name="Hall N."/>
            <person name="Anjard C."/>
            <person name="Hemphill L."/>
            <person name="Bason N."/>
            <person name="Farbrother P."/>
            <person name="Desany B."/>
            <person name="Just E."/>
            <person name="Morio T."/>
            <person name="Rost R."/>
            <person name="Churcher C.M."/>
            <person name="Cooper J."/>
            <person name="Haydock S."/>
            <person name="van Driessche N."/>
            <person name="Cronin A."/>
            <person name="Goodhead I."/>
            <person name="Muzny D.M."/>
            <person name="Mourier T."/>
            <person name="Pain A."/>
            <person name="Lu M."/>
            <person name="Harper D."/>
            <person name="Lindsay R."/>
            <person name="Hauser H."/>
            <person name="James K.D."/>
            <person name="Quiles M."/>
            <person name="Madan Babu M."/>
            <person name="Saito T."/>
            <person name="Buchrieser C."/>
            <person name="Wardroper A."/>
            <person name="Felder M."/>
            <person name="Thangavelu M."/>
            <person name="Johnson D."/>
            <person name="Knights A."/>
            <person name="Loulseged H."/>
            <person name="Mungall K.L."/>
            <person name="Oliver K."/>
            <person name="Price C."/>
            <person name="Quail M.A."/>
            <person name="Urushihara H."/>
            <person name="Hernandez J."/>
            <person name="Rabbinowitsch E."/>
            <person name="Steffen D."/>
            <person name="Sanders M."/>
            <person name="Ma J."/>
            <person name="Kohara Y."/>
            <person name="Sharp S."/>
            <person name="Simmonds M.N."/>
            <person name="Spiegler S."/>
            <person name="Tivey A."/>
            <person name="Sugano S."/>
            <person name="White B."/>
            <person name="Walker D."/>
            <person name="Woodward J.R."/>
            <person name="Winckler T."/>
            <person name="Tanaka Y."/>
            <person name="Shaulsky G."/>
            <person name="Schleicher M."/>
            <person name="Weinstock G.M."/>
            <person name="Rosenthal A."/>
            <person name="Cox E.C."/>
            <person name="Chisholm R.L."/>
            <person name="Gibbs R.A."/>
            <person name="Loomis W.F."/>
            <person name="Platzer M."/>
            <person name="Kay R.R."/>
            <person name="Williams J.G."/>
            <person name="Dear P.H."/>
            <person name="Noegel A.A."/>
            <person name="Barrell B.G."/>
            <person name="Kuspa A."/>
        </authorList>
    </citation>
    <scope>NUCLEOTIDE SEQUENCE [LARGE SCALE GENOMIC DNA]</scope>
    <source>
        <strain>AX4</strain>
    </source>
</reference>
<organism>
    <name type="scientific">Dictyostelium discoideum</name>
    <name type="common">Social amoeba</name>
    <dbReference type="NCBI Taxonomy" id="44689"/>
    <lineage>
        <taxon>Eukaryota</taxon>
        <taxon>Amoebozoa</taxon>
        <taxon>Evosea</taxon>
        <taxon>Eumycetozoa</taxon>
        <taxon>Dictyostelia</taxon>
        <taxon>Dictyosteliales</taxon>
        <taxon>Dictyosteliaceae</taxon>
        <taxon>Dictyostelium</taxon>
    </lineage>
</organism>
<feature type="chain" id="PRO_0000317343" description="UPF0512 protein E">
    <location>
        <begin position="1"/>
        <end position="91"/>
    </location>
</feature>
<feature type="region of interest" description="Disordered" evidence="1">
    <location>
        <begin position="1"/>
        <end position="26"/>
    </location>
</feature>
<feature type="compositionally biased region" description="Low complexity" evidence="1">
    <location>
        <begin position="1"/>
        <end position="25"/>
    </location>
</feature>
<protein>
    <recommendedName>
        <fullName>UPF0512 protein E</fullName>
    </recommendedName>
</protein>
<evidence type="ECO:0000256" key="1">
    <source>
        <dbReference type="SAM" id="MobiDB-lite"/>
    </source>
</evidence>
<evidence type="ECO:0000305" key="2"/>
<gene>
    <name type="ORF">DDB_G0269818</name>
</gene>
<proteinExistence type="inferred from homology"/>
<sequence length="91" mass="9190">MAIFKSISSISNSTSAMGSSNSTSNRNGFTSNDNSIAYFDGGCGGSGLGGWGGLSGWGGDGGFNGGCSGGSNTNIINLDIDIGRRRHRRCC</sequence>
<accession>Q55D15</accession>